<accession>B2UVJ7</accession>
<name>MNME_HELPS</name>
<protein>
    <recommendedName>
        <fullName evidence="1">tRNA modification GTPase MnmE</fullName>
        <ecNumber evidence="1">3.6.-.-</ecNumber>
    </recommendedName>
</protein>
<comment type="function">
    <text evidence="1">Exhibits a very high intrinsic GTPase hydrolysis rate. Involved in the addition of a carboxymethylaminomethyl (cmnm) group at the wobble position (U34) of certain tRNAs, forming tRNA-cmnm(5)s(2)U34.</text>
</comment>
<comment type="cofactor">
    <cofactor evidence="1">
        <name>K(+)</name>
        <dbReference type="ChEBI" id="CHEBI:29103"/>
    </cofactor>
    <text evidence="1">Binds 1 potassium ion per subunit.</text>
</comment>
<comment type="subunit">
    <text evidence="1">Homodimer. Heterotetramer of two MnmE and two MnmG subunits.</text>
</comment>
<comment type="subcellular location">
    <subcellularLocation>
        <location evidence="1">Cytoplasm</location>
    </subcellularLocation>
</comment>
<comment type="similarity">
    <text evidence="1">Belongs to the TRAFAC class TrmE-Era-EngA-EngB-Septin-like GTPase superfamily. TrmE GTPase family.</text>
</comment>
<organism>
    <name type="scientific">Helicobacter pylori (strain Shi470)</name>
    <dbReference type="NCBI Taxonomy" id="512562"/>
    <lineage>
        <taxon>Bacteria</taxon>
        <taxon>Pseudomonadati</taxon>
        <taxon>Campylobacterota</taxon>
        <taxon>Epsilonproteobacteria</taxon>
        <taxon>Campylobacterales</taxon>
        <taxon>Helicobacteraceae</taxon>
        <taxon>Helicobacter</taxon>
    </lineage>
</organism>
<keyword id="KW-0963">Cytoplasm</keyword>
<keyword id="KW-0342">GTP-binding</keyword>
<keyword id="KW-0378">Hydrolase</keyword>
<keyword id="KW-0460">Magnesium</keyword>
<keyword id="KW-0479">Metal-binding</keyword>
<keyword id="KW-0547">Nucleotide-binding</keyword>
<keyword id="KW-0630">Potassium</keyword>
<keyword id="KW-0819">tRNA processing</keyword>
<dbReference type="EC" id="3.6.-.-" evidence="1"/>
<dbReference type="EMBL" id="CP001072">
    <property type="protein sequence ID" value="ACD48879.1"/>
    <property type="molecule type" value="Genomic_DNA"/>
</dbReference>
<dbReference type="RefSeq" id="WP_012443442.1">
    <property type="nucleotide sequence ID" value="NC_010698.2"/>
</dbReference>
<dbReference type="SMR" id="B2UVJ7"/>
<dbReference type="KEGG" id="hps:HPSH_07430"/>
<dbReference type="HOGENOM" id="CLU_019624_4_1_7"/>
<dbReference type="GO" id="GO:0005829">
    <property type="term" value="C:cytosol"/>
    <property type="evidence" value="ECO:0007669"/>
    <property type="project" value="TreeGrafter"/>
</dbReference>
<dbReference type="GO" id="GO:0005525">
    <property type="term" value="F:GTP binding"/>
    <property type="evidence" value="ECO:0007669"/>
    <property type="project" value="UniProtKB-UniRule"/>
</dbReference>
<dbReference type="GO" id="GO:0003924">
    <property type="term" value="F:GTPase activity"/>
    <property type="evidence" value="ECO:0007669"/>
    <property type="project" value="UniProtKB-UniRule"/>
</dbReference>
<dbReference type="GO" id="GO:0046872">
    <property type="term" value="F:metal ion binding"/>
    <property type="evidence" value="ECO:0007669"/>
    <property type="project" value="UniProtKB-KW"/>
</dbReference>
<dbReference type="GO" id="GO:0030488">
    <property type="term" value="P:tRNA methylation"/>
    <property type="evidence" value="ECO:0007669"/>
    <property type="project" value="TreeGrafter"/>
</dbReference>
<dbReference type="GO" id="GO:0002098">
    <property type="term" value="P:tRNA wobble uridine modification"/>
    <property type="evidence" value="ECO:0007669"/>
    <property type="project" value="TreeGrafter"/>
</dbReference>
<dbReference type="CDD" id="cd04164">
    <property type="entry name" value="trmE"/>
    <property type="match status" value="1"/>
</dbReference>
<dbReference type="CDD" id="cd14858">
    <property type="entry name" value="TrmE_N"/>
    <property type="match status" value="1"/>
</dbReference>
<dbReference type="FunFam" id="3.40.50.300:FF:001376">
    <property type="entry name" value="tRNA modification GTPase MnmE"/>
    <property type="match status" value="1"/>
</dbReference>
<dbReference type="Gene3D" id="3.40.50.300">
    <property type="entry name" value="P-loop containing nucleotide triphosphate hydrolases"/>
    <property type="match status" value="1"/>
</dbReference>
<dbReference type="Gene3D" id="3.30.1360.120">
    <property type="entry name" value="Probable tRNA modification gtpase trme, domain 1"/>
    <property type="match status" value="1"/>
</dbReference>
<dbReference type="Gene3D" id="1.20.120.430">
    <property type="entry name" value="tRNA modification GTPase MnmE domain 2"/>
    <property type="match status" value="1"/>
</dbReference>
<dbReference type="HAMAP" id="MF_00379">
    <property type="entry name" value="GTPase_MnmE"/>
    <property type="match status" value="1"/>
</dbReference>
<dbReference type="InterPro" id="IPR031168">
    <property type="entry name" value="G_TrmE"/>
</dbReference>
<dbReference type="InterPro" id="IPR006073">
    <property type="entry name" value="GTP-bd"/>
</dbReference>
<dbReference type="InterPro" id="IPR018948">
    <property type="entry name" value="GTP-bd_TrmE_N"/>
</dbReference>
<dbReference type="InterPro" id="IPR004520">
    <property type="entry name" value="GTPase_MnmE"/>
</dbReference>
<dbReference type="InterPro" id="IPR027368">
    <property type="entry name" value="MnmE_dom2"/>
</dbReference>
<dbReference type="InterPro" id="IPR025867">
    <property type="entry name" value="MnmE_helical"/>
</dbReference>
<dbReference type="InterPro" id="IPR027417">
    <property type="entry name" value="P-loop_NTPase"/>
</dbReference>
<dbReference type="InterPro" id="IPR005225">
    <property type="entry name" value="Small_GTP-bd"/>
</dbReference>
<dbReference type="InterPro" id="IPR027266">
    <property type="entry name" value="TrmE/GcvT_dom1"/>
</dbReference>
<dbReference type="NCBIfam" id="TIGR00450">
    <property type="entry name" value="mnmE_trmE_thdF"/>
    <property type="match status" value="1"/>
</dbReference>
<dbReference type="NCBIfam" id="TIGR00231">
    <property type="entry name" value="small_GTP"/>
    <property type="match status" value="1"/>
</dbReference>
<dbReference type="PANTHER" id="PTHR42714">
    <property type="entry name" value="TRNA MODIFICATION GTPASE GTPBP3"/>
    <property type="match status" value="1"/>
</dbReference>
<dbReference type="PANTHER" id="PTHR42714:SF2">
    <property type="entry name" value="TRNA MODIFICATION GTPASE GTPBP3, MITOCHONDRIAL"/>
    <property type="match status" value="1"/>
</dbReference>
<dbReference type="Pfam" id="PF01926">
    <property type="entry name" value="MMR_HSR1"/>
    <property type="match status" value="1"/>
</dbReference>
<dbReference type="Pfam" id="PF12631">
    <property type="entry name" value="MnmE_helical"/>
    <property type="match status" value="1"/>
</dbReference>
<dbReference type="Pfam" id="PF10396">
    <property type="entry name" value="TrmE_N"/>
    <property type="match status" value="1"/>
</dbReference>
<dbReference type="SUPFAM" id="SSF52540">
    <property type="entry name" value="P-loop containing nucleoside triphosphate hydrolases"/>
    <property type="match status" value="1"/>
</dbReference>
<dbReference type="PROSITE" id="PS51709">
    <property type="entry name" value="G_TRME"/>
    <property type="match status" value="1"/>
</dbReference>
<feature type="chain" id="PRO_1000197054" description="tRNA modification GTPase MnmE">
    <location>
        <begin position="1"/>
        <end position="450"/>
    </location>
</feature>
<feature type="domain" description="TrmE-type G">
    <location>
        <begin position="213"/>
        <end position="376"/>
    </location>
</feature>
<feature type="binding site" evidence="1">
    <location>
        <position position="21"/>
    </location>
    <ligand>
        <name>(6S)-5-formyl-5,6,7,8-tetrahydrofolate</name>
        <dbReference type="ChEBI" id="CHEBI:57457"/>
    </ligand>
</feature>
<feature type="binding site" evidence="1">
    <location>
        <position position="78"/>
    </location>
    <ligand>
        <name>(6S)-5-formyl-5,6,7,8-tetrahydrofolate</name>
        <dbReference type="ChEBI" id="CHEBI:57457"/>
    </ligand>
</feature>
<feature type="binding site" evidence="1">
    <location>
        <position position="117"/>
    </location>
    <ligand>
        <name>(6S)-5-formyl-5,6,7,8-tetrahydrofolate</name>
        <dbReference type="ChEBI" id="CHEBI:57457"/>
    </ligand>
</feature>
<feature type="binding site" evidence="1">
    <location>
        <begin position="223"/>
        <end position="228"/>
    </location>
    <ligand>
        <name>GTP</name>
        <dbReference type="ChEBI" id="CHEBI:37565"/>
    </ligand>
</feature>
<feature type="binding site" evidence="1">
    <location>
        <position position="223"/>
    </location>
    <ligand>
        <name>K(+)</name>
        <dbReference type="ChEBI" id="CHEBI:29103"/>
    </ligand>
</feature>
<feature type="binding site" evidence="1">
    <location>
        <position position="227"/>
    </location>
    <ligand>
        <name>Mg(2+)</name>
        <dbReference type="ChEBI" id="CHEBI:18420"/>
    </ligand>
</feature>
<feature type="binding site" evidence="1">
    <location>
        <begin position="242"/>
        <end position="248"/>
    </location>
    <ligand>
        <name>GTP</name>
        <dbReference type="ChEBI" id="CHEBI:37565"/>
    </ligand>
</feature>
<feature type="binding site" evidence="1">
    <location>
        <position position="242"/>
    </location>
    <ligand>
        <name>K(+)</name>
        <dbReference type="ChEBI" id="CHEBI:29103"/>
    </ligand>
</feature>
<feature type="binding site" evidence="1">
    <location>
        <position position="244"/>
    </location>
    <ligand>
        <name>K(+)</name>
        <dbReference type="ChEBI" id="CHEBI:29103"/>
    </ligand>
</feature>
<feature type="binding site" evidence="1">
    <location>
        <position position="247"/>
    </location>
    <ligand>
        <name>K(+)</name>
        <dbReference type="ChEBI" id="CHEBI:29103"/>
    </ligand>
</feature>
<feature type="binding site" evidence="1">
    <location>
        <position position="248"/>
    </location>
    <ligand>
        <name>Mg(2+)</name>
        <dbReference type="ChEBI" id="CHEBI:18420"/>
    </ligand>
</feature>
<feature type="binding site" evidence="1">
    <location>
        <begin position="267"/>
        <end position="270"/>
    </location>
    <ligand>
        <name>GTP</name>
        <dbReference type="ChEBI" id="CHEBI:37565"/>
    </ligand>
</feature>
<feature type="binding site" evidence="1">
    <location>
        <position position="450"/>
    </location>
    <ligand>
        <name>(6S)-5-formyl-5,6,7,8-tetrahydrofolate</name>
        <dbReference type="ChEBI" id="CHEBI:57457"/>
    </ligand>
</feature>
<evidence type="ECO:0000255" key="1">
    <source>
        <dbReference type="HAMAP-Rule" id="MF_00379"/>
    </source>
</evidence>
<gene>
    <name evidence="1" type="primary">mnmE</name>
    <name evidence="1" type="synonym">trmE</name>
    <name type="ordered locus">HPSH_07430</name>
</gene>
<reference key="1">
    <citation type="submission" date="2008-05" db="EMBL/GenBank/DDBJ databases">
        <title>Genome sequence of Helicobacter pylori from the remote Amazon: traces of Asian ancestry of the first Americans.</title>
        <authorList>
            <person name="Kersulyte D."/>
            <person name="Kalia A."/>
            <person name="Gilman R.H."/>
            <person name="Berg D.E."/>
        </authorList>
    </citation>
    <scope>NUCLEOTIDE SEQUENCE [LARGE SCALE GENOMIC DNA]</scope>
    <source>
        <strain>Shi470</strain>
    </source>
</reference>
<proteinExistence type="inferred from homology"/>
<sequence length="450" mass="49988">MNDTIAAIATPLGKGAISVIKISGNSALNILKQLTQKQDFTPRYAYVCDIFSNGVLLDKALVIYFKAPYSFTGEDVCEIQCHGNPLLAQNILQACLNLGARLAKAGEFSKKAFLNHKMDLSEIEASVQLILCEDESVLNALARQLKGELKIFIEEARGNLLKLLASSEVLIDYSEEDIPSDFLDEVSLNLEKQIASFKDLLDFSNTQKQKNKGHALSIVGKPNAGKSSLLNAMLLEERALVSDIKGTTRDTIEEVIELQGHKVRLIDTAGIRESADKIERLGIEKSLKSLENCDIILGVFDLSKPLEKEDFNLIDTLNRAKKPCIVVLNKNDLAPKLELEILKSHLKIPYSLLETNTLNSKACLKDLSQKISAFFPKLDTQNKLLLTSLAQKTALENAIFELQNAKNHLETLELFSYHLLSAIESLNLLTRPYETSQMLDSMFSEFCLGK</sequence>